<organism>
    <name type="scientific">Bordetella parapertussis (strain 12822 / ATCC BAA-587 / NCTC 13253)</name>
    <dbReference type="NCBI Taxonomy" id="257311"/>
    <lineage>
        <taxon>Bacteria</taxon>
        <taxon>Pseudomonadati</taxon>
        <taxon>Pseudomonadota</taxon>
        <taxon>Betaproteobacteria</taxon>
        <taxon>Burkholderiales</taxon>
        <taxon>Alcaligenaceae</taxon>
        <taxon>Bordetella</taxon>
    </lineage>
</organism>
<keyword id="KW-0687">Ribonucleoprotein</keyword>
<keyword id="KW-0689">Ribosomal protein</keyword>
<keyword id="KW-0694">RNA-binding</keyword>
<keyword id="KW-0699">rRNA-binding</keyword>
<name>RL14_BORPA</name>
<accession>Q7W2E5</accession>
<reference key="1">
    <citation type="journal article" date="2003" name="Nat. Genet.">
        <title>Comparative analysis of the genome sequences of Bordetella pertussis, Bordetella parapertussis and Bordetella bronchiseptica.</title>
        <authorList>
            <person name="Parkhill J."/>
            <person name="Sebaihia M."/>
            <person name="Preston A."/>
            <person name="Murphy L.D."/>
            <person name="Thomson N.R."/>
            <person name="Harris D.E."/>
            <person name="Holden M.T.G."/>
            <person name="Churcher C.M."/>
            <person name="Bentley S.D."/>
            <person name="Mungall K.L."/>
            <person name="Cerdeno-Tarraga A.-M."/>
            <person name="Temple L."/>
            <person name="James K.D."/>
            <person name="Harris B."/>
            <person name="Quail M.A."/>
            <person name="Achtman M."/>
            <person name="Atkin R."/>
            <person name="Baker S."/>
            <person name="Basham D."/>
            <person name="Bason N."/>
            <person name="Cherevach I."/>
            <person name="Chillingworth T."/>
            <person name="Collins M."/>
            <person name="Cronin A."/>
            <person name="Davis P."/>
            <person name="Doggett J."/>
            <person name="Feltwell T."/>
            <person name="Goble A."/>
            <person name="Hamlin N."/>
            <person name="Hauser H."/>
            <person name="Holroyd S."/>
            <person name="Jagels K."/>
            <person name="Leather S."/>
            <person name="Moule S."/>
            <person name="Norberczak H."/>
            <person name="O'Neil S."/>
            <person name="Ormond D."/>
            <person name="Price C."/>
            <person name="Rabbinowitsch E."/>
            <person name="Rutter S."/>
            <person name="Sanders M."/>
            <person name="Saunders D."/>
            <person name="Seeger K."/>
            <person name="Sharp S."/>
            <person name="Simmonds M."/>
            <person name="Skelton J."/>
            <person name="Squares R."/>
            <person name="Squares S."/>
            <person name="Stevens K."/>
            <person name="Unwin L."/>
            <person name="Whitehead S."/>
            <person name="Barrell B.G."/>
            <person name="Maskell D.J."/>
        </authorList>
    </citation>
    <scope>NUCLEOTIDE SEQUENCE [LARGE SCALE GENOMIC DNA]</scope>
    <source>
        <strain>12822 / ATCC BAA-587 / NCTC 13253</strain>
    </source>
</reference>
<gene>
    <name evidence="1" type="primary">rplN</name>
    <name type="ordered locus">BPP0041</name>
</gene>
<evidence type="ECO:0000255" key="1">
    <source>
        <dbReference type="HAMAP-Rule" id="MF_01367"/>
    </source>
</evidence>
<evidence type="ECO:0000305" key="2"/>
<proteinExistence type="inferred from homology"/>
<comment type="function">
    <text evidence="1">Binds to 23S rRNA. Forms part of two intersubunit bridges in the 70S ribosome.</text>
</comment>
<comment type="subunit">
    <text evidence="1">Part of the 50S ribosomal subunit. Forms a cluster with proteins L3 and L19. In the 70S ribosome, L14 and L19 interact and together make contacts with the 16S rRNA in bridges B5 and B8.</text>
</comment>
<comment type="similarity">
    <text evidence="1">Belongs to the universal ribosomal protein uL14 family.</text>
</comment>
<sequence>MIQMQTTLDVADNTGARAVMCIKVLGGSKRRYAGIGDIIKVSVKDAAPRGRVKKGEIYNAVVVRTAKGVRRKDGSLIRFGGNAAVLLNAKLEPIGTRIFGPVTRELRTERFMKIVSLAPEVL</sequence>
<protein>
    <recommendedName>
        <fullName evidence="1">Large ribosomal subunit protein uL14</fullName>
    </recommendedName>
    <alternativeName>
        <fullName evidence="2">50S ribosomal protein L14</fullName>
    </alternativeName>
</protein>
<dbReference type="EMBL" id="BX640423">
    <property type="protein sequence ID" value="CAE39782.1"/>
    <property type="molecule type" value="Genomic_DNA"/>
</dbReference>
<dbReference type="RefSeq" id="WP_003806916.1">
    <property type="nucleotide sequence ID" value="NC_002928.3"/>
</dbReference>
<dbReference type="SMR" id="Q7W2E5"/>
<dbReference type="GeneID" id="93206271"/>
<dbReference type="KEGG" id="bpa:BPP0041"/>
<dbReference type="HOGENOM" id="CLU_095071_2_1_4"/>
<dbReference type="Proteomes" id="UP000001421">
    <property type="component" value="Chromosome"/>
</dbReference>
<dbReference type="GO" id="GO:0022625">
    <property type="term" value="C:cytosolic large ribosomal subunit"/>
    <property type="evidence" value="ECO:0007669"/>
    <property type="project" value="TreeGrafter"/>
</dbReference>
<dbReference type="GO" id="GO:0070180">
    <property type="term" value="F:large ribosomal subunit rRNA binding"/>
    <property type="evidence" value="ECO:0007669"/>
    <property type="project" value="TreeGrafter"/>
</dbReference>
<dbReference type="GO" id="GO:0003735">
    <property type="term" value="F:structural constituent of ribosome"/>
    <property type="evidence" value="ECO:0007669"/>
    <property type="project" value="InterPro"/>
</dbReference>
<dbReference type="GO" id="GO:0006412">
    <property type="term" value="P:translation"/>
    <property type="evidence" value="ECO:0007669"/>
    <property type="project" value="UniProtKB-UniRule"/>
</dbReference>
<dbReference type="CDD" id="cd00337">
    <property type="entry name" value="Ribosomal_uL14"/>
    <property type="match status" value="1"/>
</dbReference>
<dbReference type="FunFam" id="2.40.150.20:FF:000001">
    <property type="entry name" value="50S ribosomal protein L14"/>
    <property type="match status" value="1"/>
</dbReference>
<dbReference type="Gene3D" id="2.40.150.20">
    <property type="entry name" value="Ribosomal protein L14"/>
    <property type="match status" value="1"/>
</dbReference>
<dbReference type="HAMAP" id="MF_01367">
    <property type="entry name" value="Ribosomal_uL14"/>
    <property type="match status" value="1"/>
</dbReference>
<dbReference type="InterPro" id="IPR000218">
    <property type="entry name" value="Ribosomal_uL14"/>
</dbReference>
<dbReference type="InterPro" id="IPR005745">
    <property type="entry name" value="Ribosomal_uL14_bac-type"/>
</dbReference>
<dbReference type="InterPro" id="IPR019972">
    <property type="entry name" value="Ribosomal_uL14_CS"/>
</dbReference>
<dbReference type="InterPro" id="IPR036853">
    <property type="entry name" value="Ribosomal_uL14_sf"/>
</dbReference>
<dbReference type="NCBIfam" id="TIGR01067">
    <property type="entry name" value="rplN_bact"/>
    <property type="match status" value="1"/>
</dbReference>
<dbReference type="PANTHER" id="PTHR11761">
    <property type="entry name" value="50S/60S RIBOSOMAL PROTEIN L14/L23"/>
    <property type="match status" value="1"/>
</dbReference>
<dbReference type="PANTHER" id="PTHR11761:SF3">
    <property type="entry name" value="LARGE RIBOSOMAL SUBUNIT PROTEIN UL14M"/>
    <property type="match status" value="1"/>
</dbReference>
<dbReference type="Pfam" id="PF00238">
    <property type="entry name" value="Ribosomal_L14"/>
    <property type="match status" value="1"/>
</dbReference>
<dbReference type="SMART" id="SM01374">
    <property type="entry name" value="Ribosomal_L14"/>
    <property type="match status" value="1"/>
</dbReference>
<dbReference type="SUPFAM" id="SSF50193">
    <property type="entry name" value="Ribosomal protein L14"/>
    <property type="match status" value="1"/>
</dbReference>
<dbReference type="PROSITE" id="PS00049">
    <property type="entry name" value="RIBOSOMAL_L14"/>
    <property type="match status" value="1"/>
</dbReference>
<feature type="chain" id="PRO_1000055526" description="Large ribosomal subunit protein uL14">
    <location>
        <begin position="1"/>
        <end position="122"/>
    </location>
</feature>